<feature type="chain" id="PRO_0000288110" description="Dihydrolipoyllysine-residue succinyltransferase component of 2-oxoglutarate dehydrogenase complex">
    <location>
        <begin position="1"/>
        <end position="424"/>
    </location>
</feature>
<feature type="domain" description="Lipoyl-binding" evidence="3">
    <location>
        <begin position="1"/>
        <end position="76"/>
    </location>
</feature>
<feature type="domain" description="Peripheral subunit-binding (PSBD)" evidence="4">
    <location>
        <begin position="128"/>
        <end position="164"/>
    </location>
</feature>
<feature type="region of interest" description="Disordered" evidence="5">
    <location>
        <begin position="76"/>
        <end position="138"/>
    </location>
</feature>
<feature type="region of interest" description="Disordered" evidence="5">
    <location>
        <begin position="155"/>
        <end position="204"/>
    </location>
</feature>
<feature type="compositionally biased region" description="Basic and acidic residues" evidence="5">
    <location>
        <begin position="91"/>
        <end position="105"/>
    </location>
</feature>
<feature type="compositionally biased region" description="Polar residues" evidence="5">
    <location>
        <begin position="122"/>
        <end position="131"/>
    </location>
</feature>
<feature type="compositionally biased region" description="Low complexity" evidence="5">
    <location>
        <begin position="162"/>
        <end position="176"/>
    </location>
</feature>
<feature type="active site" evidence="2">
    <location>
        <position position="395"/>
    </location>
</feature>
<feature type="active site" evidence="2">
    <location>
        <position position="399"/>
    </location>
</feature>
<feature type="modified residue" description="N6-lipoyllysine" evidence="3">
    <location>
        <position position="42"/>
    </location>
</feature>
<gene>
    <name type="primary">odhB</name>
    <name type="synonym">sucB</name>
    <name type="ordered locus">SSP1326</name>
</gene>
<keyword id="KW-0012">Acyltransferase</keyword>
<keyword id="KW-0450">Lipoyl</keyword>
<keyword id="KW-1185">Reference proteome</keyword>
<keyword id="KW-0808">Transferase</keyword>
<keyword id="KW-0816">Tricarboxylic acid cycle</keyword>
<name>ODO2_STAS1</name>
<reference key="1">
    <citation type="journal article" date="2005" name="Proc. Natl. Acad. Sci. U.S.A.">
        <title>Whole genome sequence of Staphylococcus saprophyticus reveals the pathogenesis of uncomplicated urinary tract infection.</title>
        <authorList>
            <person name="Kuroda M."/>
            <person name="Yamashita A."/>
            <person name="Hirakawa H."/>
            <person name="Kumano M."/>
            <person name="Morikawa K."/>
            <person name="Higashide M."/>
            <person name="Maruyama A."/>
            <person name="Inose Y."/>
            <person name="Matoba K."/>
            <person name="Toh H."/>
            <person name="Kuhara S."/>
            <person name="Hattori M."/>
            <person name="Ohta T."/>
        </authorList>
    </citation>
    <scope>NUCLEOTIDE SEQUENCE [LARGE SCALE GENOMIC DNA]</scope>
    <source>
        <strain>ATCC 15305 / DSM 20229 / NCIMB 8711 / NCTC 7292 / S-41</strain>
    </source>
</reference>
<accession>Q49XM4</accession>
<protein>
    <recommendedName>
        <fullName>Dihydrolipoyllysine-residue succinyltransferase component of 2-oxoglutarate dehydrogenase complex</fullName>
        <ecNumber evidence="2">2.3.1.61</ecNumber>
    </recommendedName>
    <alternativeName>
        <fullName>2-oxoglutarate dehydrogenase complex component E2</fullName>
        <shortName>OGDC-E2</shortName>
    </alternativeName>
    <alternativeName>
        <fullName>Dihydrolipoamide succinyltransferase component of 2-oxoglutarate dehydrogenase complex</fullName>
    </alternativeName>
</protein>
<comment type="function">
    <text evidence="2">E2 component of the 2-oxoglutarate dehydrogenase (OGDH) complex which catalyzes the second step in the conversion of 2-oxoglutarate to succinyl-CoA and CO(2).</text>
</comment>
<comment type="catalytic activity">
    <reaction evidence="2">
        <text>N(6)-[(R)-dihydrolipoyl]-L-lysyl-[protein] + succinyl-CoA = N(6)-[(R)-S(8)-succinyldihydrolipoyl]-L-lysyl-[protein] + CoA</text>
        <dbReference type="Rhea" id="RHEA:15213"/>
        <dbReference type="Rhea" id="RHEA-COMP:10475"/>
        <dbReference type="Rhea" id="RHEA-COMP:20092"/>
        <dbReference type="ChEBI" id="CHEBI:57287"/>
        <dbReference type="ChEBI" id="CHEBI:57292"/>
        <dbReference type="ChEBI" id="CHEBI:83100"/>
        <dbReference type="ChEBI" id="CHEBI:83120"/>
        <dbReference type="EC" id="2.3.1.61"/>
    </reaction>
</comment>
<comment type="cofactor">
    <cofactor evidence="1">
        <name>(R)-lipoate</name>
        <dbReference type="ChEBI" id="CHEBI:83088"/>
    </cofactor>
    <text evidence="1">Binds 1 lipoyl cofactor covalently.</text>
</comment>
<comment type="pathway">
    <text>Amino-acid degradation; L-lysine degradation via saccharopine pathway; glutaryl-CoA from L-lysine: step 6/6.</text>
</comment>
<comment type="subunit">
    <text evidence="2">Forms a 24-polypeptide structural core with octahedral symmetry. Part of the 2-oxoglutarate dehydrogenase (OGDH) complex composed of E1 (2-oxoglutarate dehydrogenase), E2 (dihydrolipoamide succinyltransferase) and E3 (dihydrolipoamide dehydrogenase); the complex contains multiple copies of the three enzymatic components (E1, E2 and E3).</text>
</comment>
<comment type="similarity">
    <text evidence="6">Belongs to the 2-oxoacid dehydrogenase family.</text>
</comment>
<dbReference type="EC" id="2.3.1.61" evidence="2"/>
<dbReference type="EMBL" id="AP008934">
    <property type="protein sequence ID" value="BAE18471.1"/>
    <property type="molecule type" value="Genomic_DNA"/>
</dbReference>
<dbReference type="RefSeq" id="WP_011303107.1">
    <property type="nucleotide sequence ID" value="NZ_MTGA01000038.1"/>
</dbReference>
<dbReference type="SMR" id="Q49XM4"/>
<dbReference type="GeneID" id="3616664"/>
<dbReference type="KEGG" id="ssp:SSP1326"/>
<dbReference type="PATRIC" id="fig|342451.11.peg.1329"/>
<dbReference type="eggNOG" id="COG0508">
    <property type="taxonomic scope" value="Bacteria"/>
</dbReference>
<dbReference type="HOGENOM" id="CLU_016733_0_0_9"/>
<dbReference type="OrthoDB" id="9805770at2"/>
<dbReference type="UniPathway" id="UPA00868">
    <property type="reaction ID" value="UER00840"/>
</dbReference>
<dbReference type="Proteomes" id="UP000006371">
    <property type="component" value="Chromosome"/>
</dbReference>
<dbReference type="GO" id="GO:0005829">
    <property type="term" value="C:cytosol"/>
    <property type="evidence" value="ECO:0007669"/>
    <property type="project" value="TreeGrafter"/>
</dbReference>
<dbReference type="GO" id="GO:0045252">
    <property type="term" value="C:oxoglutarate dehydrogenase complex"/>
    <property type="evidence" value="ECO:0007669"/>
    <property type="project" value="InterPro"/>
</dbReference>
<dbReference type="GO" id="GO:0004149">
    <property type="term" value="F:dihydrolipoyllysine-residue succinyltransferase activity"/>
    <property type="evidence" value="ECO:0007669"/>
    <property type="project" value="UniProtKB-EC"/>
</dbReference>
<dbReference type="GO" id="GO:0033512">
    <property type="term" value="P:L-lysine catabolic process to acetyl-CoA via saccharopine"/>
    <property type="evidence" value="ECO:0007669"/>
    <property type="project" value="UniProtKB-UniPathway"/>
</dbReference>
<dbReference type="GO" id="GO:0006099">
    <property type="term" value="P:tricarboxylic acid cycle"/>
    <property type="evidence" value="ECO:0007669"/>
    <property type="project" value="UniProtKB-KW"/>
</dbReference>
<dbReference type="CDD" id="cd06849">
    <property type="entry name" value="lipoyl_domain"/>
    <property type="match status" value="1"/>
</dbReference>
<dbReference type="FunFam" id="3.30.559.10:FF:000007">
    <property type="entry name" value="Dihydrolipoamide acetyltransferase component of pyruvate dehydrogenase complex"/>
    <property type="match status" value="1"/>
</dbReference>
<dbReference type="Gene3D" id="2.40.50.100">
    <property type="match status" value="1"/>
</dbReference>
<dbReference type="Gene3D" id="3.30.559.10">
    <property type="entry name" value="Chloramphenicol acetyltransferase-like domain"/>
    <property type="match status" value="1"/>
</dbReference>
<dbReference type="Gene3D" id="4.10.320.10">
    <property type="entry name" value="E3-binding domain"/>
    <property type="match status" value="1"/>
</dbReference>
<dbReference type="InterPro" id="IPR003016">
    <property type="entry name" value="2-oxoA_DH_lipoyl-BS"/>
</dbReference>
<dbReference type="InterPro" id="IPR050537">
    <property type="entry name" value="2-oxoacid_dehydrogenase"/>
</dbReference>
<dbReference type="InterPro" id="IPR001078">
    <property type="entry name" value="2-oxoacid_DH_actylTfrase"/>
</dbReference>
<dbReference type="InterPro" id="IPR000089">
    <property type="entry name" value="Biotin_lipoyl"/>
</dbReference>
<dbReference type="InterPro" id="IPR023213">
    <property type="entry name" value="CAT-like_dom_sf"/>
</dbReference>
<dbReference type="InterPro" id="IPR036625">
    <property type="entry name" value="E3-bd_dom_sf"/>
</dbReference>
<dbReference type="InterPro" id="IPR004167">
    <property type="entry name" value="PSBD"/>
</dbReference>
<dbReference type="InterPro" id="IPR011053">
    <property type="entry name" value="Single_hybrid_motif"/>
</dbReference>
<dbReference type="InterPro" id="IPR006255">
    <property type="entry name" value="SucB"/>
</dbReference>
<dbReference type="NCBIfam" id="NF004309">
    <property type="entry name" value="PRK05704.1"/>
    <property type="match status" value="1"/>
</dbReference>
<dbReference type="NCBIfam" id="TIGR01347">
    <property type="entry name" value="sucB"/>
    <property type="match status" value="1"/>
</dbReference>
<dbReference type="PANTHER" id="PTHR43416:SF5">
    <property type="entry name" value="DIHYDROLIPOYLLYSINE-RESIDUE SUCCINYLTRANSFERASE COMPONENT OF 2-OXOGLUTARATE DEHYDROGENASE COMPLEX, MITOCHONDRIAL"/>
    <property type="match status" value="1"/>
</dbReference>
<dbReference type="PANTHER" id="PTHR43416">
    <property type="entry name" value="DIHYDROLIPOYLLYSINE-RESIDUE SUCCINYLTRANSFERASE COMPONENT OF 2-OXOGLUTARATE DEHYDROGENASE COMPLEX, MITOCHONDRIAL-RELATED"/>
    <property type="match status" value="1"/>
</dbReference>
<dbReference type="Pfam" id="PF00198">
    <property type="entry name" value="2-oxoacid_dh"/>
    <property type="match status" value="1"/>
</dbReference>
<dbReference type="Pfam" id="PF00364">
    <property type="entry name" value="Biotin_lipoyl"/>
    <property type="match status" value="1"/>
</dbReference>
<dbReference type="Pfam" id="PF02817">
    <property type="entry name" value="E3_binding"/>
    <property type="match status" value="1"/>
</dbReference>
<dbReference type="SUPFAM" id="SSF52777">
    <property type="entry name" value="CoA-dependent acyltransferases"/>
    <property type="match status" value="1"/>
</dbReference>
<dbReference type="SUPFAM" id="SSF51230">
    <property type="entry name" value="Single hybrid motif"/>
    <property type="match status" value="1"/>
</dbReference>
<dbReference type="PROSITE" id="PS50968">
    <property type="entry name" value="BIOTINYL_LIPOYL"/>
    <property type="match status" value="1"/>
</dbReference>
<dbReference type="PROSITE" id="PS00189">
    <property type="entry name" value="LIPOYL"/>
    <property type="match status" value="1"/>
</dbReference>
<dbReference type="PROSITE" id="PS51826">
    <property type="entry name" value="PSBD"/>
    <property type="match status" value="1"/>
</dbReference>
<evidence type="ECO:0000250" key="1"/>
<evidence type="ECO:0000250" key="2">
    <source>
        <dbReference type="UniProtKB" id="P0AFG6"/>
    </source>
</evidence>
<evidence type="ECO:0000255" key="3">
    <source>
        <dbReference type="PROSITE-ProRule" id="PRU01066"/>
    </source>
</evidence>
<evidence type="ECO:0000255" key="4">
    <source>
        <dbReference type="PROSITE-ProRule" id="PRU01170"/>
    </source>
</evidence>
<evidence type="ECO:0000256" key="5">
    <source>
        <dbReference type="SAM" id="MobiDB-lite"/>
    </source>
</evidence>
<evidence type="ECO:0000305" key="6"/>
<organism>
    <name type="scientific">Staphylococcus saprophyticus subsp. saprophyticus (strain ATCC 15305 / DSM 20229 / NCIMB 8711 / NCTC 7292 / S-41)</name>
    <dbReference type="NCBI Taxonomy" id="342451"/>
    <lineage>
        <taxon>Bacteria</taxon>
        <taxon>Bacillati</taxon>
        <taxon>Bacillota</taxon>
        <taxon>Bacilli</taxon>
        <taxon>Bacillales</taxon>
        <taxon>Staphylococcaceae</taxon>
        <taxon>Staphylococcus</taxon>
    </lineage>
</organism>
<proteinExistence type="inferred from homology"/>
<sequence length="424" mass="46457">MPEVKVPELAESITEGTIAEWLKQVGDSVDKGEAIVELETDKVNVEVVSEEAGVLQELLANEGDTVEVGQAIAVVGEGSGNNTSEAPAKQEAPKQETETSTDDKSAQPAEATSNDTDDKSQDNNQRVNATPSARKYAREKGIDLSEIAAASNDVVRKEHVDQSQTQTSTQQQAQPAAKEETKKLTQQNPSKPVIREKMSRRKKTAAKKLLEVSNNTAMLTTFNEIDMTNVMDLRKRKKEQFIKDHDGTKLGFMSFFTKAAVAALKKYPEVNAEIDGDDMITKQYYDIGVAVSTEDGLLVPFVRDCDKKNFAEIEDEIGNLAKKARDKKLGLDDMVNGSFTITNGGIFGSMMSTPIINGSQAAILGMHSIITRPIAIDADTIENRPMMYIALSYDHRIIDGKEAVGFLKTIKELIENPEDLLLES</sequence>